<gene>
    <name type="primary">yufK</name>
    <name type="ordered locus">BSU31510</name>
</gene>
<keyword id="KW-1003">Cell membrane</keyword>
<keyword id="KW-0472">Membrane</keyword>
<keyword id="KW-1185">Reference proteome</keyword>
<keyword id="KW-0812">Transmembrane</keyword>
<keyword id="KW-1133">Transmembrane helix</keyword>
<reference key="1">
    <citation type="journal article" date="1997" name="Microbiology">
        <title>Analysis of the Bacillus subtilis genome: cloning and nucleotide sequence of a 62 kb region between 275 degrees (rrnB) and 284 degrees (pai).</title>
        <authorList>
            <person name="Oudega B."/>
            <person name="Koningstein G."/>
            <person name="Rodrigues L."/>
            <person name="de Sales Ramon M."/>
            <person name="Hilbert H."/>
            <person name="Duesterhoeft A."/>
            <person name="Pohl T.M."/>
            <person name="Weitzenegger T."/>
        </authorList>
    </citation>
    <scope>NUCLEOTIDE SEQUENCE [GENOMIC DNA]</scope>
    <source>
        <strain>168</strain>
    </source>
</reference>
<reference key="2">
    <citation type="journal article" date="1997" name="Nature">
        <title>The complete genome sequence of the Gram-positive bacterium Bacillus subtilis.</title>
        <authorList>
            <person name="Kunst F."/>
            <person name="Ogasawara N."/>
            <person name="Moszer I."/>
            <person name="Albertini A.M."/>
            <person name="Alloni G."/>
            <person name="Azevedo V."/>
            <person name="Bertero M.G."/>
            <person name="Bessieres P."/>
            <person name="Bolotin A."/>
            <person name="Borchert S."/>
            <person name="Borriss R."/>
            <person name="Boursier L."/>
            <person name="Brans A."/>
            <person name="Braun M."/>
            <person name="Brignell S.C."/>
            <person name="Bron S."/>
            <person name="Brouillet S."/>
            <person name="Bruschi C.V."/>
            <person name="Caldwell B."/>
            <person name="Capuano V."/>
            <person name="Carter N.M."/>
            <person name="Choi S.-K."/>
            <person name="Codani J.-J."/>
            <person name="Connerton I.F."/>
            <person name="Cummings N.J."/>
            <person name="Daniel R.A."/>
            <person name="Denizot F."/>
            <person name="Devine K.M."/>
            <person name="Duesterhoeft A."/>
            <person name="Ehrlich S.D."/>
            <person name="Emmerson P.T."/>
            <person name="Entian K.-D."/>
            <person name="Errington J."/>
            <person name="Fabret C."/>
            <person name="Ferrari E."/>
            <person name="Foulger D."/>
            <person name="Fritz C."/>
            <person name="Fujita M."/>
            <person name="Fujita Y."/>
            <person name="Fuma S."/>
            <person name="Galizzi A."/>
            <person name="Galleron N."/>
            <person name="Ghim S.-Y."/>
            <person name="Glaser P."/>
            <person name="Goffeau A."/>
            <person name="Golightly E.J."/>
            <person name="Grandi G."/>
            <person name="Guiseppi G."/>
            <person name="Guy B.J."/>
            <person name="Haga K."/>
            <person name="Haiech J."/>
            <person name="Harwood C.R."/>
            <person name="Henaut A."/>
            <person name="Hilbert H."/>
            <person name="Holsappel S."/>
            <person name="Hosono S."/>
            <person name="Hullo M.-F."/>
            <person name="Itaya M."/>
            <person name="Jones L.-M."/>
            <person name="Joris B."/>
            <person name="Karamata D."/>
            <person name="Kasahara Y."/>
            <person name="Klaerr-Blanchard M."/>
            <person name="Klein C."/>
            <person name="Kobayashi Y."/>
            <person name="Koetter P."/>
            <person name="Koningstein G."/>
            <person name="Krogh S."/>
            <person name="Kumano M."/>
            <person name="Kurita K."/>
            <person name="Lapidus A."/>
            <person name="Lardinois S."/>
            <person name="Lauber J."/>
            <person name="Lazarevic V."/>
            <person name="Lee S.-M."/>
            <person name="Levine A."/>
            <person name="Liu H."/>
            <person name="Masuda S."/>
            <person name="Mauel C."/>
            <person name="Medigue C."/>
            <person name="Medina N."/>
            <person name="Mellado R.P."/>
            <person name="Mizuno M."/>
            <person name="Moestl D."/>
            <person name="Nakai S."/>
            <person name="Noback M."/>
            <person name="Noone D."/>
            <person name="O'Reilly M."/>
            <person name="Ogawa K."/>
            <person name="Ogiwara A."/>
            <person name="Oudega B."/>
            <person name="Park S.-H."/>
            <person name="Parro V."/>
            <person name="Pohl T.M."/>
            <person name="Portetelle D."/>
            <person name="Porwollik S."/>
            <person name="Prescott A.M."/>
            <person name="Presecan E."/>
            <person name="Pujic P."/>
            <person name="Purnelle B."/>
            <person name="Rapoport G."/>
            <person name="Rey M."/>
            <person name="Reynolds S."/>
            <person name="Rieger M."/>
            <person name="Rivolta C."/>
            <person name="Rocha E."/>
            <person name="Roche B."/>
            <person name="Rose M."/>
            <person name="Sadaie Y."/>
            <person name="Sato T."/>
            <person name="Scanlan E."/>
            <person name="Schleich S."/>
            <person name="Schroeter R."/>
            <person name="Scoffone F."/>
            <person name="Sekiguchi J."/>
            <person name="Sekowska A."/>
            <person name="Seror S.J."/>
            <person name="Serror P."/>
            <person name="Shin B.-S."/>
            <person name="Soldo B."/>
            <person name="Sorokin A."/>
            <person name="Tacconi E."/>
            <person name="Takagi T."/>
            <person name="Takahashi H."/>
            <person name="Takemaru K."/>
            <person name="Takeuchi M."/>
            <person name="Tamakoshi A."/>
            <person name="Tanaka T."/>
            <person name="Terpstra P."/>
            <person name="Tognoni A."/>
            <person name="Tosato V."/>
            <person name="Uchiyama S."/>
            <person name="Vandenbol M."/>
            <person name="Vannier F."/>
            <person name="Vassarotti A."/>
            <person name="Viari A."/>
            <person name="Wambutt R."/>
            <person name="Wedler E."/>
            <person name="Wedler H."/>
            <person name="Weitzenegger T."/>
            <person name="Winters P."/>
            <person name="Wipat A."/>
            <person name="Yamamoto H."/>
            <person name="Yamane K."/>
            <person name="Yasumoto K."/>
            <person name="Yata K."/>
            <person name="Yoshida K."/>
            <person name="Yoshikawa H.-F."/>
            <person name="Zumstein E."/>
            <person name="Yoshikawa H."/>
            <person name="Danchin A."/>
        </authorList>
    </citation>
    <scope>NUCLEOTIDE SEQUENCE [LARGE SCALE GENOMIC DNA]</scope>
    <source>
        <strain>168</strain>
    </source>
</reference>
<sequence length="185" mass="20939">MKNTYLTGYFPLIAILLFSSSLSISTSLYALKMLSSFGMYDGMLDYFSEKGIRLALFAAFALLYFMVLSALKLIANTVTELSLLFFANDPEGNNLKKLRMGSMIYLGGGILSFVLLQNVIWIVIWFAVVTLAYFVFTVYRIYSTLSLMSLVGFILLELLFWFTFVIGILFIFIKLYNSIMASLPV</sequence>
<proteinExistence type="predicted"/>
<comment type="subcellular location">
    <subcellularLocation>
        <location evidence="2">Cell membrane</location>
        <topology evidence="2">Multi-pass membrane protein</topology>
    </subcellularLocation>
</comment>
<comment type="sequence caution" evidence="2">
    <conflict type="erroneous initiation">
        <sequence resource="EMBL-CDS" id="CAB07945"/>
    </conflict>
</comment>
<evidence type="ECO:0000255" key="1"/>
<evidence type="ECO:0000305" key="2"/>
<protein>
    <recommendedName>
        <fullName>Uncharacterized membrane protein YufK</fullName>
    </recommendedName>
</protein>
<dbReference type="EMBL" id="Z93937">
    <property type="protein sequence ID" value="CAB07945.1"/>
    <property type="status" value="ALT_INIT"/>
    <property type="molecule type" value="Genomic_DNA"/>
</dbReference>
<dbReference type="EMBL" id="AL009126">
    <property type="protein sequence ID" value="CAB15140.2"/>
    <property type="molecule type" value="Genomic_DNA"/>
</dbReference>
<dbReference type="PIR" id="H70008">
    <property type="entry name" value="H70008"/>
</dbReference>
<dbReference type="RefSeq" id="NP_391029.2">
    <property type="nucleotide sequence ID" value="NC_000964.3"/>
</dbReference>
<dbReference type="RefSeq" id="WP_003228837.1">
    <property type="nucleotide sequence ID" value="NZ_OZ025638.1"/>
</dbReference>
<dbReference type="FunCoup" id="O05249">
    <property type="interactions" value="342"/>
</dbReference>
<dbReference type="STRING" id="224308.BSU31510"/>
<dbReference type="PaxDb" id="224308-BSU31510"/>
<dbReference type="EnsemblBacteria" id="CAB15140">
    <property type="protein sequence ID" value="CAB15140"/>
    <property type="gene ID" value="BSU_31510"/>
</dbReference>
<dbReference type="GeneID" id="938853"/>
<dbReference type="KEGG" id="bsu:BSU31510"/>
<dbReference type="PATRIC" id="fig|224308.179.peg.3416"/>
<dbReference type="eggNOG" id="ENOG5030GF5">
    <property type="taxonomic scope" value="Bacteria"/>
</dbReference>
<dbReference type="InParanoid" id="O05249"/>
<dbReference type="OrthoDB" id="2739240at2"/>
<dbReference type="BioCyc" id="BSUB:BSU31510-MONOMER"/>
<dbReference type="Proteomes" id="UP000001570">
    <property type="component" value="Chromosome"/>
</dbReference>
<dbReference type="GO" id="GO:0005886">
    <property type="term" value="C:plasma membrane"/>
    <property type="evidence" value="ECO:0007669"/>
    <property type="project" value="UniProtKB-SubCell"/>
</dbReference>
<dbReference type="InterPro" id="IPR035289">
    <property type="entry name" value="DUF5366"/>
</dbReference>
<dbReference type="Pfam" id="PF17328">
    <property type="entry name" value="DUF5366"/>
    <property type="match status" value="1"/>
</dbReference>
<accession>O05249</accession>
<feature type="chain" id="PRO_0000049916" description="Uncharacterized membrane protein YufK">
    <location>
        <begin position="1"/>
        <end position="185"/>
    </location>
</feature>
<feature type="transmembrane region" description="Helical" evidence="1">
    <location>
        <begin position="4"/>
        <end position="24"/>
    </location>
</feature>
<feature type="transmembrane region" description="Helical" evidence="1">
    <location>
        <begin position="54"/>
        <end position="74"/>
    </location>
</feature>
<feature type="transmembrane region" description="Helical" evidence="1">
    <location>
        <begin position="98"/>
        <end position="118"/>
    </location>
</feature>
<feature type="transmembrane region" description="Helical" evidence="1">
    <location>
        <begin position="119"/>
        <end position="139"/>
    </location>
</feature>
<feature type="transmembrane region" description="Helical" evidence="1">
    <location>
        <begin position="153"/>
        <end position="173"/>
    </location>
</feature>
<organism>
    <name type="scientific">Bacillus subtilis (strain 168)</name>
    <dbReference type="NCBI Taxonomy" id="224308"/>
    <lineage>
        <taxon>Bacteria</taxon>
        <taxon>Bacillati</taxon>
        <taxon>Bacillota</taxon>
        <taxon>Bacilli</taxon>
        <taxon>Bacillales</taxon>
        <taxon>Bacillaceae</taxon>
        <taxon>Bacillus</taxon>
    </lineage>
</organism>
<name>YUFK_BACSU</name>